<protein>
    <recommendedName>
        <fullName>MAX gene-associated protein</fullName>
    </recommendedName>
    <alternativeName>
        <fullName>MAX dimerization protein 5</fullName>
    </alternativeName>
</protein>
<gene>
    <name evidence="11" type="primary">MGA</name>
    <name type="synonym">KIAA0518</name>
    <name evidence="10" type="synonym">MAD5</name>
</gene>
<comment type="function">
    <text evidence="2">Functions as a dual-specificity transcription factor, regulating the expression of both MAX-network and T-box family target genes. Functions as a repressor or an activator. Binds to 5'-AATTTCACACCTAGGTGTGAAATT-3' core sequence and seems to regulate MYC-MAX target genes. Suppresses transcriptional activation by MYC and inhibits MYC-dependent cell transformation. Function activated by heterodimerization with MAX. This heterodimerization serves the dual function of both generating an E-box-binding heterodimer and simultaneously blocking interaction of a corepressor (By similarity).</text>
</comment>
<comment type="subunit">
    <text evidence="1 7 8">Interacts with MAX. Requires dimerization with MAX for E-box binding (By similarity). Component of some MLL1/MLL complex, at least composed of the core components KMT2A/MLL1, ASH2L, HCFC1/HCF1, WDR5 and RBBP5, as well as the facultative components BACC1, CHD8, E2F6, HSP70, INO80C, KANSL1, LAS1L, MAX, MCRS1, MGA, MYST1/MOF, PELP1, PHF20, PRP31, RING2, RUVB1/TIP49A, RUVB2/TIP49B, SENP3, TAF1, TAF4, TAF6, TAF7, TAF9 and TEX10. Interacts with ZMYND11.</text>
</comment>
<comment type="interaction">
    <interactant intactId="EBI-2815196">
        <id>Q8IWI9</id>
    </interactant>
    <interactant intactId="EBI-78176">
        <id>Q13185</id>
        <label>CBX3</label>
    </interactant>
    <organismsDiffer>false</organismsDiffer>
    <experiments>4</experiments>
</comment>
<comment type="interaction">
    <interactant intactId="EBI-2815196">
        <id>Q8IWI9</id>
    </interactant>
    <interactant intactId="EBI-751711">
        <id>P61244</id>
        <label>MAX</label>
    </interactant>
    <organismsDiffer>false</organismsDiffer>
    <experiments>7</experiments>
</comment>
<comment type="subcellular location">
    <subcellularLocation>
        <location evidence="12">Nucleus</location>
    </subcellularLocation>
</comment>
<comment type="alternative products">
    <event type="alternative splicing"/>
    <isoform>
        <id>Q8IWI9-4</id>
        <name>1</name>
        <sequence type="displayed"/>
    </isoform>
    <isoform>
        <id>Q8IWI9-3</id>
        <name>2</name>
        <sequence type="described" ref="VSP_060177"/>
    </isoform>
</comment>
<comment type="tissue specificity">
    <text evidence="9">Highly expressed in germ cells and granulosa cells.</text>
</comment>
<comment type="developmental stage">
    <text evidence="9">In germ cells and granulosa cells, expressed from early embryonic through adult developmental stages.</text>
</comment>
<comment type="domain">
    <text evidence="1">Transcription repression is enhanced or dependent on the presence of the T-box DNA-binding domain.</text>
</comment>
<comment type="disease" evidence="9">
    <disease id="DI-06988">
        <name>Premature ovarian failure 26</name>
        <acronym>POF26</acronym>
        <description>A form of premature ovarian failure, an ovarian disorder defined as the cessation of ovarian function under the age of 40 years. It is characterized by oligomenorrhea or amenorrhea, in the presence of elevated levels of serum gonadotropins and low estradiol. POF26 inheritance is autosomal dominant.</description>
        <dbReference type="MIM" id="621065"/>
    </disease>
    <text>The disease is caused by variants affecting the gene represented in this entry.</text>
</comment>
<comment type="sequence caution" evidence="12">
    <conflict type="erroneous initiation">
        <sequence resource="EMBL-CDS" id="BAB14186"/>
    </conflict>
    <text>Truncated N-terminus.</text>
</comment>
<comment type="sequence caution" evidence="12">
    <conflict type="erroneous initiation">
        <sequence resource="EMBL-CDS" id="BAB14543"/>
    </conflict>
    <text>Truncated N-terminus.</text>
</comment>
<feature type="chain" id="PRO_0000342692" description="MAX gene-associated protein">
    <location>
        <begin position="1"/>
        <end position="3065"/>
    </location>
</feature>
<feature type="domain" description="bHLH" evidence="5">
    <location>
        <begin position="2423"/>
        <end position="2474"/>
    </location>
</feature>
<feature type="DNA-binding region" description="T-box" evidence="4">
    <location>
        <begin position="84"/>
        <end position="260"/>
    </location>
</feature>
<feature type="region of interest" description="Disordered" evidence="6">
    <location>
        <begin position="259"/>
        <end position="322"/>
    </location>
</feature>
<feature type="region of interest" description="Disordered" evidence="6">
    <location>
        <begin position="604"/>
        <end position="653"/>
    </location>
</feature>
<feature type="region of interest" description="Disordered" evidence="6">
    <location>
        <begin position="881"/>
        <end position="911"/>
    </location>
</feature>
<feature type="region of interest" description="Disordered" evidence="6">
    <location>
        <begin position="971"/>
        <end position="990"/>
    </location>
</feature>
<feature type="region of interest" description="Disordered" evidence="6">
    <location>
        <begin position="1246"/>
        <end position="1332"/>
    </location>
</feature>
<feature type="region of interest" description="Disordered" evidence="6">
    <location>
        <begin position="1380"/>
        <end position="1429"/>
    </location>
</feature>
<feature type="region of interest" description="Disordered" evidence="6">
    <location>
        <begin position="1488"/>
        <end position="1517"/>
    </location>
</feature>
<feature type="region of interest" description="Disordered" evidence="6">
    <location>
        <begin position="1905"/>
        <end position="1927"/>
    </location>
</feature>
<feature type="region of interest" description="Disordered" evidence="6">
    <location>
        <begin position="1967"/>
        <end position="2029"/>
    </location>
</feature>
<feature type="region of interest" description="Disordered" evidence="6">
    <location>
        <begin position="2258"/>
        <end position="2316"/>
    </location>
</feature>
<feature type="region of interest" description="Disordered" evidence="6">
    <location>
        <begin position="2576"/>
        <end position="2595"/>
    </location>
</feature>
<feature type="region of interest" description="Disordered" evidence="6">
    <location>
        <begin position="2668"/>
        <end position="2709"/>
    </location>
</feature>
<feature type="region of interest" description="Disordered" evidence="6">
    <location>
        <begin position="2944"/>
        <end position="2968"/>
    </location>
</feature>
<feature type="coiled-coil region" evidence="3">
    <location>
        <begin position="1111"/>
        <end position="1147"/>
    </location>
</feature>
<feature type="coiled-coil region" evidence="3">
    <location>
        <begin position="2817"/>
        <end position="2841"/>
    </location>
</feature>
<feature type="compositionally biased region" description="Basic and acidic residues" evidence="6">
    <location>
        <begin position="259"/>
        <end position="277"/>
    </location>
</feature>
<feature type="compositionally biased region" description="Polar residues" evidence="6">
    <location>
        <begin position="278"/>
        <end position="289"/>
    </location>
</feature>
<feature type="compositionally biased region" description="Basic and acidic residues" evidence="6">
    <location>
        <begin position="309"/>
        <end position="322"/>
    </location>
</feature>
<feature type="compositionally biased region" description="Basic residues" evidence="6">
    <location>
        <begin position="613"/>
        <end position="624"/>
    </location>
</feature>
<feature type="compositionally biased region" description="Polar residues" evidence="6">
    <location>
        <begin position="632"/>
        <end position="648"/>
    </location>
</feature>
<feature type="compositionally biased region" description="Polar residues" evidence="6">
    <location>
        <begin position="901"/>
        <end position="911"/>
    </location>
</feature>
<feature type="compositionally biased region" description="Low complexity" evidence="6">
    <location>
        <begin position="972"/>
        <end position="981"/>
    </location>
</feature>
<feature type="compositionally biased region" description="Low complexity" evidence="6">
    <location>
        <begin position="1253"/>
        <end position="1269"/>
    </location>
</feature>
<feature type="compositionally biased region" description="Low complexity" evidence="6">
    <location>
        <begin position="1310"/>
        <end position="1322"/>
    </location>
</feature>
<feature type="compositionally biased region" description="Polar residues" evidence="6">
    <location>
        <begin position="1495"/>
        <end position="1514"/>
    </location>
</feature>
<feature type="compositionally biased region" description="Polar residues" evidence="6">
    <location>
        <begin position="1911"/>
        <end position="1927"/>
    </location>
</feature>
<feature type="compositionally biased region" description="Basic and acidic residues" evidence="6">
    <location>
        <begin position="1968"/>
        <end position="1994"/>
    </location>
</feature>
<feature type="compositionally biased region" description="Polar residues" evidence="6">
    <location>
        <begin position="2008"/>
        <end position="2023"/>
    </location>
</feature>
<feature type="compositionally biased region" description="Acidic residues" evidence="6">
    <location>
        <begin position="2300"/>
        <end position="2316"/>
    </location>
</feature>
<feature type="compositionally biased region" description="Polar residues" evidence="6">
    <location>
        <begin position="2581"/>
        <end position="2595"/>
    </location>
</feature>
<feature type="compositionally biased region" description="Basic and acidic residues" evidence="6">
    <location>
        <begin position="2671"/>
        <end position="2709"/>
    </location>
</feature>
<feature type="modified residue" description="Phosphoserine" evidence="15">
    <location>
        <position position="534"/>
    </location>
</feature>
<feature type="modified residue" description="Phosphoserine" evidence="17">
    <location>
        <position position="607"/>
    </location>
</feature>
<feature type="modified residue" description="Phosphoserine" evidence="14">
    <location>
        <position position="645"/>
    </location>
</feature>
<feature type="modified residue" description="Phosphoserine" evidence="17">
    <location>
        <position position="851"/>
    </location>
</feature>
<feature type="modified residue" description="Phosphoserine" evidence="13 17">
    <location>
        <position position="924"/>
    </location>
</feature>
<feature type="modified residue" description="Phosphoserine" evidence="13 15 17">
    <location>
        <position position="1208"/>
    </location>
</feature>
<feature type="modified residue" description="Phosphoserine" evidence="15">
    <location>
        <position position="1430"/>
    </location>
</feature>
<feature type="modified residue" description="Phosphoserine" evidence="13 15 17">
    <location>
        <position position="1457"/>
    </location>
</feature>
<feature type="modified residue" description="Omega-N-methylarginine" evidence="18">
    <location>
        <position position="2265"/>
    </location>
</feature>
<feature type="modified residue" description="Phosphoserine" evidence="15 17">
    <location>
        <position position="2541"/>
    </location>
</feature>
<feature type="modified residue" description="Phosphoserine" evidence="14">
    <location>
        <position position="2910"/>
    </location>
</feature>
<feature type="modified residue" description="Phosphoserine" evidence="16 17">
    <location>
        <position position="2921"/>
    </location>
</feature>
<feature type="modified residue" description="Phosphoserine" evidence="17">
    <location>
        <position position="2978"/>
    </location>
</feature>
<feature type="cross-link" description="Glycyl lysine isopeptide (Lys-Gly) (interchain with G-Cter in SUMO2)" evidence="22">
    <location>
        <position position="4"/>
    </location>
</feature>
<feature type="cross-link" description="Glycyl lysine isopeptide (Lys-Gly) (interchain with G-Cter in SUMO2)" evidence="22">
    <location>
        <position position="178"/>
    </location>
</feature>
<feature type="cross-link" description="Glycyl lysine isopeptide (Lys-Gly) (interchain with G-Cter in SUMO2)" evidence="22">
    <location>
        <position position="323"/>
    </location>
</feature>
<feature type="cross-link" description="Glycyl lysine isopeptide (Lys-Gly) (interchain with G-Cter in SUMO2)" evidence="20 22">
    <location>
        <position position="329"/>
    </location>
</feature>
<feature type="cross-link" description="Glycyl lysine isopeptide (Lys-Gly) (interchain with G-Cter in SUMO2)" evidence="22">
    <location>
        <position position="349"/>
    </location>
</feature>
<feature type="cross-link" description="Glycyl lysine isopeptide (Lys-Gly) (interchain with G-Cter in SUMO2)" evidence="22">
    <location>
        <position position="432"/>
    </location>
</feature>
<feature type="cross-link" description="Glycyl lysine isopeptide (Lys-Gly) (interchain with G-Cter in SUMO2)" evidence="19 22">
    <location>
        <position position="460"/>
    </location>
</feature>
<feature type="cross-link" description="Glycyl lysine isopeptide (Lys-Gly) (interchain with G-Cter in SUMO2)" evidence="22">
    <location>
        <position position="465"/>
    </location>
</feature>
<feature type="cross-link" description="Glycyl lysine isopeptide (Lys-Gly) (interchain with G-Cter in SUMO2)" evidence="22">
    <location>
        <position position="482"/>
    </location>
</feature>
<feature type="cross-link" description="Glycyl lysine isopeptide (Lys-Gly) (interchain with G-Cter in SUMO2)" evidence="19 22">
    <location>
        <position position="570"/>
    </location>
</feature>
<feature type="cross-link" description="Glycyl lysine isopeptide (Lys-Gly) (interchain with G-Cter in SUMO2)" evidence="22">
    <location>
        <position position="613"/>
    </location>
</feature>
<feature type="cross-link" description="Glycyl lysine isopeptide (Lys-Gly) (interchain with G-Cter in SUMO2)" evidence="22">
    <location>
        <position position="654"/>
    </location>
</feature>
<feature type="cross-link" description="Glycyl lysine isopeptide (Lys-Gly) (interchain with G-Cter in SUMO2)" evidence="22">
    <location>
        <position position="785"/>
    </location>
</feature>
<feature type="cross-link" description="Glycyl lysine isopeptide (Lys-Gly) (interchain with G-Cter in SUMO2)" evidence="22">
    <location>
        <position position="791"/>
    </location>
</feature>
<feature type="cross-link" description="Glycyl lysine isopeptide (Lys-Gly) (interchain with G-Cter in SUMO2)" evidence="22">
    <location>
        <position position="817"/>
    </location>
</feature>
<feature type="cross-link" description="Glycyl lysine isopeptide (Lys-Gly) (interchain with G-Cter in SUMO2)" evidence="22">
    <location>
        <position position="826"/>
    </location>
</feature>
<feature type="cross-link" description="Glycyl lysine isopeptide (Lys-Gly) (interchain with G-Cter in SUMO2)" evidence="22">
    <location>
        <position position="928"/>
    </location>
</feature>
<feature type="cross-link" description="Glycyl lysine isopeptide (Lys-Gly) (interchain with G-Cter in SUMO2)" evidence="22">
    <location>
        <position position="990"/>
    </location>
</feature>
<feature type="cross-link" description="Glycyl lysine isopeptide (Lys-Gly) (interchain with G-Cter in SUMO2)" evidence="22">
    <location>
        <position position="1091"/>
    </location>
</feature>
<feature type="cross-link" description="Glycyl lysine isopeptide (Lys-Gly) (interchain with G-Cter in SUMO2)" evidence="22">
    <location>
        <position position="1140"/>
    </location>
</feature>
<feature type="cross-link" description="Glycyl lysine isopeptide (Lys-Gly) (interchain with G-Cter in SUMO2)" evidence="22">
    <location>
        <position position="1162"/>
    </location>
</feature>
<feature type="cross-link" description="Glycyl lysine isopeptide (Lys-Gly) (interchain with G-Cter in SUMO2)" evidence="22">
    <location>
        <position position="1199"/>
    </location>
</feature>
<feature type="cross-link" description="Glycyl lysine isopeptide (Lys-Gly) (interchain with G-Cter in SUMO2)" evidence="20 22">
    <location>
        <position position="1207"/>
    </location>
</feature>
<feature type="cross-link" description="Glycyl lysine isopeptide (Lys-Gly) (interchain with G-Cter in SUMO2)" evidence="22">
    <location>
        <position position="1461"/>
    </location>
</feature>
<feature type="cross-link" description="Glycyl lysine isopeptide (Lys-Gly) (interchain with G-Cter in SUMO2)" evidence="22">
    <location>
        <position position="1502"/>
    </location>
</feature>
<feature type="cross-link" description="Glycyl lysine isopeptide (Lys-Gly) (interchain with G-Cter in SUMO2)" evidence="19 20 22">
    <location>
        <position position="1985"/>
    </location>
</feature>
<feature type="cross-link" description="Glycyl lysine isopeptide (Lys-Gly) (interchain with G-Cter in SUMO2)" evidence="22">
    <location>
        <position position="1992"/>
    </location>
</feature>
<feature type="cross-link" description="Glycyl lysine isopeptide (Lys-Gly) (interchain with G-Cter in SUMO2)" evidence="22">
    <location>
        <position position="2103"/>
    </location>
</feature>
<feature type="cross-link" description="Glycyl lysine isopeptide (Lys-Gly) (interchain with G-Cter in SUMO2)" evidence="19 20 21 22">
    <location>
        <position position="2113"/>
    </location>
</feature>
<feature type="cross-link" description="Glycyl lysine isopeptide (Lys-Gly) (interchain with G-Cter in SUMO2)" evidence="19 20 21 22">
    <location>
        <position position="2135"/>
    </location>
</feature>
<feature type="cross-link" description="Glycyl lysine isopeptide (Lys-Gly) (interchain with G-Cter in SUMO2)" evidence="22">
    <location>
        <position position="2139"/>
    </location>
</feature>
<feature type="cross-link" description="Glycyl lysine isopeptide (Lys-Gly) (interchain with G-Cter in SUMO2)" evidence="22">
    <location>
        <position position="2146"/>
    </location>
</feature>
<feature type="cross-link" description="Glycyl lysine isopeptide (Lys-Gly) (interchain with G-Cter in SUMO2)" evidence="22">
    <location>
        <position position="2159"/>
    </location>
</feature>
<feature type="cross-link" description="Glycyl lysine isopeptide (Lys-Gly) (interchain with G-Cter in SUMO2)" evidence="20 22">
    <location>
        <position position="2194"/>
    </location>
</feature>
<feature type="cross-link" description="Glycyl lysine isopeptide (Lys-Gly) (interchain with G-Cter in SUMO2)" evidence="22">
    <location>
        <position position="2206"/>
    </location>
</feature>
<feature type="cross-link" description="Glycyl lysine isopeptide (Lys-Gly) (interchain with G-Cter in SUMO2)" evidence="19 20 21 22">
    <location>
        <position position="2238"/>
    </location>
</feature>
<feature type="cross-link" description="Glycyl lysine isopeptide (Lys-Gly) (interchain with G-Cter in SUMO2)" evidence="20 22">
    <location>
        <position position="2284"/>
    </location>
</feature>
<feature type="cross-link" description="Glycyl lysine isopeptide (Lys-Gly) (interchain with G-Cter in SUMO2)" evidence="22">
    <location>
        <position position="2378"/>
    </location>
</feature>
<feature type="cross-link" description="Glycyl lysine isopeptide (Lys-Gly) (interchain with G-Cter in SUMO2)" evidence="20 22">
    <location>
        <position position="2413"/>
    </location>
</feature>
<feature type="cross-link" description="Glycyl lysine isopeptide (Lys-Gly) (interchain with G-Cter in SUMO2)" evidence="22">
    <location>
        <position position="2457"/>
    </location>
</feature>
<feature type="cross-link" description="Glycyl lysine isopeptide (Lys-Gly) (interchain with G-Cter in SUMO2)" evidence="22">
    <location>
        <position position="2532"/>
    </location>
</feature>
<feature type="cross-link" description="Glycyl lysine isopeptide (Lys-Gly) (interchain with G-Cter in SUMO2)" evidence="22">
    <location>
        <position position="2546"/>
    </location>
</feature>
<feature type="cross-link" description="Glycyl lysine isopeptide (Lys-Gly) (interchain with G-Cter in SUMO2)" evidence="22">
    <location>
        <position position="2629"/>
    </location>
</feature>
<feature type="cross-link" description="Glycyl lysine isopeptide (Lys-Gly) (interchain with G-Cter in SUMO2)" evidence="22">
    <location>
        <position position="2679"/>
    </location>
</feature>
<feature type="cross-link" description="Glycyl lysine isopeptide (Lys-Gly) (interchain with G-Cter in SUMO2)" evidence="22">
    <location>
        <position position="2698"/>
    </location>
</feature>
<feature type="cross-link" description="Glycyl lysine isopeptide (Lys-Gly) (interchain with G-Cter in SUMO2)" evidence="22">
    <location>
        <position position="2784"/>
    </location>
</feature>
<feature type="cross-link" description="Glycyl lysine isopeptide (Lys-Gly) (interchain with G-Cter in SUMO2)" evidence="22">
    <location>
        <position position="3041"/>
    </location>
</feature>
<feature type="splice variant" id="VSP_060177" description="In isoform 2.">
    <location>
        <begin position="1529"/>
        <end position="1737"/>
    </location>
</feature>
<feature type="sequence variant" id="VAR_044341" description="In dbSNP:rs3803348.">
    <original>T</original>
    <variation>A</variation>
    <location>
        <position position="338"/>
    </location>
</feature>
<feature type="sequence variant" id="VAR_044342" description="In dbSNP:rs2178004.">
    <original>T</original>
    <variation>S</variation>
    <location>
        <position position="716"/>
    </location>
</feature>
<feature type="sequence variant" id="VAR_090383" description="In POF26; likely pathogenic." evidence="9">
    <location>
        <begin position="896"/>
        <end position="3065"/>
    </location>
</feature>
<feature type="sequence variant" id="VAR_090384" description="In POF26; likely pathogenic." evidence="9">
    <location>
        <begin position="910"/>
        <end position="3065"/>
    </location>
</feature>
<feature type="sequence variant" id="VAR_090385" description="In POF26; likely pathogenic." evidence="9">
    <location>
        <begin position="1073"/>
        <end position="3065"/>
    </location>
</feature>
<feature type="sequence variant" id="VAR_044343" description="In dbSNP:rs17677811.">
    <original>C</original>
    <variation>R</variation>
    <location>
        <position position="1270"/>
    </location>
</feature>
<feature type="sequence variant" id="VAR_057268" description="In dbSNP:rs17677991.">
    <original>P</original>
    <variation>A</variation>
    <location>
        <position position="1523"/>
    </location>
</feature>
<feature type="sequence conflict" description="In Ref. 3; BAB14186." evidence="12" ref="3">
    <original>K</original>
    <variation>N</variation>
    <location>
        <position position="266"/>
    </location>
</feature>
<feature type="sequence conflict" description="In Ref. 3; BAB14186." evidence="12" ref="3">
    <original>S</original>
    <variation>R</variation>
    <location>
        <position position="742"/>
    </location>
</feature>
<feature type="sequence conflict" description="In Ref. 2; AAI36660." evidence="12" ref="2">
    <original>R</original>
    <variation>P</variation>
    <location>
        <position position="1383"/>
    </location>
</feature>
<feature type="sequence conflict" description="In Ref. 3; BAB14543." evidence="12" ref="3">
    <location>
        <position position="2230"/>
    </location>
</feature>
<feature type="sequence conflict" description="In Ref. 3; BAB14543." evidence="12" ref="3">
    <original>A</original>
    <variation>T</variation>
    <location>
        <position position="2365"/>
    </location>
</feature>
<feature type="sequence conflict" description="In Ref. 2; AAI36660." evidence="12" ref="2">
    <original>P</original>
    <variation>L</variation>
    <location>
        <position position="2744"/>
    </location>
</feature>
<organism>
    <name type="scientific">Homo sapiens</name>
    <name type="common">Human</name>
    <dbReference type="NCBI Taxonomy" id="9606"/>
    <lineage>
        <taxon>Eukaryota</taxon>
        <taxon>Metazoa</taxon>
        <taxon>Chordata</taxon>
        <taxon>Craniata</taxon>
        <taxon>Vertebrata</taxon>
        <taxon>Euteleostomi</taxon>
        <taxon>Mammalia</taxon>
        <taxon>Eutheria</taxon>
        <taxon>Euarchontoglires</taxon>
        <taxon>Primates</taxon>
        <taxon>Haplorrhini</taxon>
        <taxon>Catarrhini</taxon>
        <taxon>Hominidae</taxon>
        <taxon>Homo</taxon>
    </lineage>
</organism>
<reference key="1">
    <citation type="journal article" date="2006" name="Nature">
        <title>Analysis of the DNA sequence and duplication history of human chromosome 15.</title>
        <authorList>
            <person name="Zody M.C."/>
            <person name="Garber M."/>
            <person name="Sharpe T."/>
            <person name="Young S.K."/>
            <person name="Rowen L."/>
            <person name="O'Neill K."/>
            <person name="Whittaker C.A."/>
            <person name="Kamal M."/>
            <person name="Chang J.L."/>
            <person name="Cuomo C.A."/>
            <person name="Dewar K."/>
            <person name="FitzGerald M.G."/>
            <person name="Kodira C.D."/>
            <person name="Madan A."/>
            <person name="Qin S."/>
            <person name="Yang X."/>
            <person name="Abbasi N."/>
            <person name="Abouelleil A."/>
            <person name="Arachchi H.M."/>
            <person name="Baradarani L."/>
            <person name="Birditt B."/>
            <person name="Bloom S."/>
            <person name="Bloom T."/>
            <person name="Borowsky M.L."/>
            <person name="Burke J."/>
            <person name="Butler J."/>
            <person name="Cook A."/>
            <person name="DeArellano K."/>
            <person name="DeCaprio D."/>
            <person name="Dorris L. III"/>
            <person name="Dors M."/>
            <person name="Eichler E.E."/>
            <person name="Engels R."/>
            <person name="Fahey J."/>
            <person name="Fleetwood P."/>
            <person name="Friedman C."/>
            <person name="Gearin G."/>
            <person name="Hall J.L."/>
            <person name="Hensley G."/>
            <person name="Johnson E."/>
            <person name="Jones C."/>
            <person name="Kamat A."/>
            <person name="Kaur A."/>
            <person name="Locke D.P."/>
            <person name="Madan A."/>
            <person name="Munson G."/>
            <person name="Jaffe D.B."/>
            <person name="Lui A."/>
            <person name="Macdonald P."/>
            <person name="Mauceli E."/>
            <person name="Naylor J.W."/>
            <person name="Nesbitt R."/>
            <person name="Nicol R."/>
            <person name="O'Leary S.B."/>
            <person name="Ratcliffe A."/>
            <person name="Rounsley S."/>
            <person name="She X."/>
            <person name="Sneddon K.M.B."/>
            <person name="Stewart S."/>
            <person name="Sougnez C."/>
            <person name="Stone S.M."/>
            <person name="Topham K."/>
            <person name="Vincent D."/>
            <person name="Wang S."/>
            <person name="Zimmer A.R."/>
            <person name="Birren B.W."/>
            <person name="Hood L."/>
            <person name="Lander E.S."/>
            <person name="Nusbaum C."/>
        </authorList>
    </citation>
    <scope>NUCLEOTIDE SEQUENCE [LARGE SCALE GENOMIC DNA]</scope>
</reference>
<reference key="2">
    <citation type="journal article" date="2004" name="Genome Res.">
        <title>The status, quality, and expansion of the NIH full-length cDNA project: the Mammalian Gene Collection (MGC).</title>
        <authorList>
            <consortium name="The MGC Project Team"/>
        </authorList>
    </citation>
    <scope>NUCLEOTIDE SEQUENCE [LARGE SCALE MRNA] (ISOFORM 2)</scope>
    <scope>VARIANTS SER-716 AND ALA-1523</scope>
    <source>
        <tissue>Testis</tissue>
    </source>
</reference>
<reference key="3">
    <citation type="journal article" date="2004" name="Nat. Genet.">
        <title>Complete sequencing and characterization of 21,243 full-length human cDNAs.</title>
        <authorList>
            <person name="Ota T."/>
            <person name="Suzuki Y."/>
            <person name="Nishikawa T."/>
            <person name="Otsuki T."/>
            <person name="Sugiyama T."/>
            <person name="Irie R."/>
            <person name="Wakamatsu A."/>
            <person name="Hayashi K."/>
            <person name="Sato H."/>
            <person name="Nagai K."/>
            <person name="Kimura K."/>
            <person name="Makita H."/>
            <person name="Sekine M."/>
            <person name="Obayashi M."/>
            <person name="Nishi T."/>
            <person name="Shibahara T."/>
            <person name="Tanaka T."/>
            <person name="Ishii S."/>
            <person name="Yamamoto J."/>
            <person name="Saito K."/>
            <person name="Kawai Y."/>
            <person name="Isono Y."/>
            <person name="Nakamura Y."/>
            <person name="Nagahari K."/>
            <person name="Murakami K."/>
            <person name="Yasuda T."/>
            <person name="Iwayanagi T."/>
            <person name="Wagatsuma M."/>
            <person name="Shiratori A."/>
            <person name="Sudo H."/>
            <person name="Hosoiri T."/>
            <person name="Kaku Y."/>
            <person name="Kodaira H."/>
            <person name="Kondo H."/>
            <person name="Sugawara M."/>
            <person name="Takahashi M."/>
            <person name="Kanda K."/>
            <person name="Yokoi T."/>
            <person name="Furuya T."/>
            <person name="Kikkawa E."/>
            <person name="Omura Y."/>
            <person name="Abe K."/>
            <person name="Kamihara K."/>
            <person name="Katsuta N."/>
            <person name="Sato K."/>
            <person name="Tanikawa M."/>
            <person name="Yamazaki M."/>
            <person name="Ninomiya K."/>
            <person name="Ishibashi T."/>
            <person name="Yamashita H."/>
            <person name="Murakawa K."/>
            <person name="Fujimori K."/>
            <person name="Tanai H."/>
            <person name="Kimata M."/>
            <person name="Watanabe M."/>
            <person name="Hiraoka S."/>
            <person name="Chiba Y."/>
            <person name="Ishida S."/>
            <person name="Ono Y."/>
            <person name="Takiguchi S."/>
            <person name="Watanabe S."/>
            <person name="Yosida M."/>
            <person name="Hotuta T."/>
            <person name="Kusano J."/>
            <person name="Kanehori K."/>
            <person name="Takahashi-Fujii A."/>
            <person name="Hara H."/>
            <person name="Tanase T.-O."/>
            <person name="Nomura Y."/>
            <person name="Togiya S."/>
            <person name="Komai F."/>
            <person name="Hara R."/>
            <person name="Takeuchi K."/>
            <person name="Arita M."/>
            <person name="Imose N."/>
            <person name="Musashino K."/>
            <person name="Yuuki H."/>
            <person name="Oshima A."/>
            <person name="Sasaki N."/>
            <person name="Aotsuka S."/>
            <person name="Yoshikawa Y."/>
            <person name="Matsunawa H."/>
            <person name="Ichihara T."/>
            <person name="Shiohata N."/>
            <person name="Sano S."/>
            <person name="Moriya S."/>
            <person name="Momiyama H."/>
            <person name="Satoh N."/>
            <person name="Takami S."/>
            <person name="Terashima Y."/>
            <person name="Suzuki O."/>
            <person name="Nakagawa S."/>
            <person name="Senoh A."/>
            <person name="Mizoguchi H."/>
            <person name="Goto Y."/>
            <person name="Shimizu F."/>
            <person name="Wakebe H."/>
            <person name="Hishigaki H."/>
            <person name="Watanabe T."/>
            <person name="Sugiyama A."/>
            <person name="Takemoto M."/>
            <person name="Kawakami B."/>
            <person name="Yamazaki M."/>
            <person name="Watanabe K."/>
            <person name="Kumagai A."/>
            <person name="Itakura S."/>
            <person name="Fukuzumi Y."/>
            <person name="Fujimori Y."/>
            <person name="Komiyama M."/>
            <person name="Tashiro H."/>
            <person name="Tanigami A."/>
            <person name="Fujiwara T."/>
            <person name="Ono T."/>
            <person name="Yamada K."/>
            <person name="Fujii Y."/>
            <person name="Ozaki K."/>
            <person name="Hirao M."/>
            <person name="Ohmori Y."/>
            <person name="Kawabata A."/>
            <person name="Hikiji T."/>
            <person name="Kobatake N."/>
            <person name="Inagaki H."/>
            <person name="Ikema Y."/>
            <person name="Okamoto S."/>
            <person name="Okitani R."/>
            <person name="Kawakami T."/>
            <person name="Noguchi S."/>
            <person name="Itoh T."/>
            <person name="Shigeta K."/>
            <person name="Senba T."/>
            <person name="Matsumura K."/>
            <person name="Nakajima Y."/>
            <person name="Mizuno T."/>
            <person name="Morinaga M."/>
            <person name="Sasaki M."/>
            <person name="Togashi T."/>
            <person name="Oyama M."/>
            <person name="Hata H."/>
            <person name="Watanabe M."/>
            <person name="Komatsu T."/>
            <person name="Mizushima-Sugano J."/>
            <person name="Satoh T."/>
            <person name="Shirai Y."/>
            <person name="Takahashi Y."/>
            <person name="Nakagawa K."/>
            <person name="Okumura K."/>
            <person name="Nagase T."/>
            <person name="Nomura N."/>
            <person name="Kikuchi H."/>
            <person name="Masuho Y."/>
            <person name="Yamashita R."/>
            <person name="Nakai K."/>
            <person name="Yada T."/>
            <person name="Nakamura Y."/>
            <person name="Ohara O."/>
            <person name="Isogai T."/>
            <person name="Sugano S."/>
        </authorList>
    </citation>
    <scope>NUCLEOTIDE SEQUENCE [LARGE SCALE MRNA] OF 183-1134 AND 1800-2526 (ISOFORM 1)</scope>
    <scope>VARIANT SER-716</scope>
    <source>
        <tissue>Ovary</tissue>
        <tissue>Teratocarcinoma</tissue>
    </source>
</reference>
<reference key="4">
    <citation type="journal article" date="1998" name="DNA Res.">
        <title>Prediction of the coding sequences of unidentified human genes. IX. The complete sequences of 100 new cDNA clones from brain which can code for large proteins in vitro.</title>
        <authorList>
            <person name="Nagase T."/>
            <person name="Ishikawa K."/>
            <person name="Miyajima N."/>
            <person name="Tanaka A."/>
            <person name="Kotani H."/>
            <person name="Nomura N."/>
            <person name="Ohara O."/>
        </authorList>
    </citation>
    <scope>NUCLEOTIDE SEQUENCE [LARGE SCALE MRNA] OF 2416-3065 (ISOFORM 1)</scope>
    <source>
        <tissue>Brain</tissue>
    </source>
</reference>
<reference key="5">
    <citation type="journal article" date="2007" name="BMC Genomics">
        <title>The full-ORF clone resource of the German cDNA consortium.</title>
        <authorList>
            <person name="Bechtel S."/>
            <person name="Rosenfelder H."/>
            <person name="Duda A."/>
            <person name="Schmidt C.P."/>
            <person name="Ernst U."/>
            <person name="Wellenreuther R."/>
            <person name="Mehrle A."/>
            <person name="Schuster C."/>
            <person name="Bahr A."/>
            <person name="Bloecker H."/>
            <person name="Heubner D."/>
            <person name="Hoerlein A."/>
            <person name="Michel G."/>
            <person name="Wedler H."/>
            <person name="Koehrer K."/>
            <person name="Ottenwaelder B."/>
            <person name="Poustka A."/>
            <person name="Wiemann S."/>
            <person name="Schupp I."/>
        </authorList>
    </citation>
    <scope>NUCLEOTIDE SEQUENCE [LARGE SCALE MRNA] OF 2817-3065 (ISOFORM 1)</scope>
    <source>
        <tissue>Uterus</tissue>
    </source>
</reference>
<reference key="6">
    <citation type="journal article" date="2005" name="Cell">
        <title>Physical association and coordinate function of the H3 K4 methyltransferase MLL1 and the H4 K16 acetyltransferase MOF.</title>
        <authorList>
            <person name="Dou Y."/>
            <person name="Milne T.A."/>
            <person name="Tackett A.J."/>
            <person name="Smith E.R."/>
            <person name="Fukuda A."/>
            <person name="Wysocka J."/>
            <person name="Allis C.D."/>
            <person name="Chait B.T."/>
            <person name="Hess J.L."/>
            <person name="Roeder R.G."/>
        </authorList>
    </citation>
    <scope>IDENTIFICATION IN THE MLL1/MLL COMPLEX</scope>
</reference>
<reference key="7">
    <citation type="journal article" date="2008" name="Proc. Natl. Acad. Sci. U.S.A.">
        <title>A quantitative atlas of mitotic phosphorylation.</title>
        <authorList>
            <person name="Dephoure N."/>
            <person name="Zhou C."/>
            <person name="Villen J."/>
            <person name="Beausoleil S.A."/>
            <person name="Bakalarski C.E."/>
            <person name="Elledge S.J."/>
            <person name="Gygi S.P."/>
        </authorList>
    </citation>
    <scope>PHOSPHORYLATION [LARGE SCALE ANALYSIS] AT SER-924; SER-1208 AND SER-1457</scope>
    <scope>IDENTIFICATION BY MASS SPECTROMETRY [LARGE SCALE ANALYSIS]</scope>
    <source>
        <tissue>Cervix carcinoma</tissue>
    </source>
</reference>
<reference key="8">
    <citation type="journal article" date="2009" name="Anal. Chem.">
        <title>Lys-N and trypsin cover complementary parts of the phosphoproteome in a refined SCX-based approach.</title>
        <authorList>
            <person name="Gauci S."/>
            <person name="Helbig A.O."/>
            <person name="Slijper M."/>
            <person name="Krijgsveld J."/>
            <person name="Heck A.J."/>
            <person name="Mohammed S."/>
        </authorList>
    </citation>
    <scope>IDENTIFICATION BY MASS SPECTROMETRY [LARGE SCALE ANALYSIS]</scope>
</reference>
<reference key="9">
    <citation type="journal article" date="2009" name="Sci. Signal.">
        <title>Quantitative phosphoproteomic analysis of T cell receptor signaling reveals system-wide modulation of protein-protein interactions.</title>
        <authorList>
            <person name="Mayya V."/>
            <person name="Lundgren D.H."/>
            <person name="Hwang S.-I."/>
            <person name="Rezaul K."/>
            <person name="Wu L."/>
            <person name="Eng J.K."/>
            <person name="Rodionov V."/>
            <person name="Han D.K."/>
        </authorList>
    </citation>
    <scope>PHOSPHORYLATION [LARGE SCALE ANALYSIS] AT SER-645 AND SER-2910</scope>
    <scope>IDENTIFICATION BY MASS SPECTROMETRY [LARGE SCALE ANALYSIS]</scope>
    <source>
        <tissue>Leukemic T-cell</tissue>
    </source>
</reference>
<reference key="10">
    <citation type="journal article" date="2010" name="Sci. Signal.">
        <title>Quantitative phosphoproteomics reveals widespread full phosphorylation site occupancy during mitosis.</title>
        <authorList>
            <person name="Olsen J.V."/>
            <person name="Vermeulen M."/>
            <person name="Santamaria A."/>
            <person name="Kumar C."/>
            <person name="Miller M.L."/>
            <person name="Jensen L.J."/>
            <person name="Gnad F."/>
            <person name="Cox J."/>
            <person name="Jensen T.S."/>
            <person name="Nigg E.A."/>
            <person name="Brunak S."/>
            <person name="Mann M."/>
        </authorList>
    </citation>
    <scope>PHOSPHORYLATION [LARGE SCALE ANALYSIS] AT SER-534; SER-1208; SER-1430; SER-1457 AND SER-2541</scope>
    <scope>IDENTIFICATION BY MASS SPECTROMETRY [LARGE SCALE ANALYSIS]</scope>
    <source>
        <tissue>Cervix carcinoma</tissue>
    </source>
</reference>
<reference key="11">
    <citation type="journal article" date="2011" name="BMC Syst. Biol.">
        <title>Initial characterization of the human central proteome.</title>
        <authorList>
            <person name="Burkard T.R."/>
            <person name="Planyavsky M."/>
            <person name="Kaupe I."/>
            <person name="Breitwieser F.P."/>
            <person name="Buerckstuemmer T."/>
            <person name="Bennett K.L."/>
            <person name="Superti-Furga G."/>
            <person name="Colinge J."/>
        </authorList>
    </citation>
    <scope>IDENTIFICATION BY MASS SPECTROMETRY [LARGE SCALE ANALYSIS]</scope>
</reference>
<reference key="12">
    <citation type="journal article" date="2011" name="Sci. Signal.">
        <title>System-wide temporal characterization of the proteome and phosphoproteome of human embryonic stem cell differentiation.</title>
        <authorList>
            <person name="Rigbolt K.T."/>
            <person name="Prokhorova T.A."/>
            <person name="Akimov V."/>
            <person name="Henningsen J."/>
            <person name="Johansen P.T."/>
            <person name="Kratchmarova I."/>
            <person name="Kassem M."/>
            <person name="Mann M."/>
            <person name="Olsen J.V."/>
            <person name="Blagoev B."/>
        </authorList>
    </citation>
    <scope>PHOSPHORYLATION [LARGE SCALE ANALYSIS] AT SER-2921</scope>
    <scope>IDENTIFICATION BY MASS SPECTROMETRY [LARGE SCALE ANALYSIS]</scope>
</reference>
<reference key="13">
    <citation type="journal article" date="2013" name="J. Proteome Res.">
        <title>Toward a comprehensive characterization of a human cancer cell phosphoproteome.</title>
        <authorList>
            <person name="Zhou H."/>
            <person name="Di Palma S."/>
            <person name="Preisinger C."/>
            <person name="Peng M."/>
            <person name="Polat A.N."/>
            <person name="Heck A.J."/>
            <person name="Mohammed S."/>
        </authorList>
    </citation>
    <scope>PHOSPHORYLATION [LARGE SCALE ANALYSIS] AT SER-607; SER-851; SER-924; SER-1208; SER-1457; SER-2541; SER-2921 AND SER-2978</scope>
    <scope>IDENTIFICATION BY MASS SPECTROMETRY [LARGE SCALE ANALYSIS]</scope>
    <source>
        <tissue>Cervix carcinoma</tissue>
        <tissue>Erythroleukemia</tissue>
    </source>
</reference>
<reference key="14">
    <citation type="journal article" date="2013" name="PLoS ONE">
        <title>Structural and functional analysis of the DEAF-1 and BS69 MYND domains.</title>
        <authorList>
            <person name="Kateb F."/>
            <person name="Perrin H."/>
            <person name="Tripsianes K."/>
            <person name="Zou P."/>
            <person name="Spadaccini R."/>
            <person name="Bottomley M."/>
            <person name="Franzmann T.M."/>
            <person name="Buchner J."/>
            <person name="Ansieau S."/>
            <person name="Sattler M."/>
        </authorList>
    </citation>
    <scope>INTERACTION WITH ZMYND11</scope>
</reference>
<reference key="15">
    <citation type="journal article" date="2014" name="Mol. Cell. Proteomics">
        <title>Immunoaffinity enrichment and mass spectrometry analysis of protein methylation.</title>
        <authorList>
            <person name="Guo A."/>
            <person name="Gu H."/>
            <person name="Zhou J."/>
            <person name="Mulhern D."/>
            <person name="Wang Y."/>
            <person name="Lee K.A."/>
            <person name="Yang V."/>
            <person name="Aguiar M."/>
            <person name="Kornhauser J."/>
            <person name="Jia X."/>
            <person name="Ren J."/>
            <person name="Beausoleil S.A."/>
            <person name="Silva J.C."/>
            <person name="Vemulapalli V."/>
            <person name="Bedford M.T."/>
            <person name="Comb M.J."/>
        </authorList>
    </citation>
    <scope>METHYLATION [LARGE SCALE ANALYSIS] AT ARG-2265</scope>
    <scope>IDENTIFICATION BY MASS SPECTROMETRY [LARGE SCALE ANALYSIS]</scope>
    <source>
        <tissue>Colon carcinoma</tissue>
    </source>
</reference>
<reference key="16">
    <citation type="journal article" date="2014" name="Nat. Struct. Mol. Biol.">
        <title>Uncovering global SUMOylation signaling networks in a site-specific manner.</title>
        <authorList>
            <person name="Hendriks I.A."/>
            <person name="D'Souza R.C."/>
            <person name="Yang B."/>
            <person name="Verlaan-de Vries M."/>
            <person name="Mann M."/>
            <person name="Vertegaal A.C."/>
        </authorList>
    </citation>
    <scope>SUMOYLATION [LARGE SCALE ANALYSIS] AT LYS-460; LYS-570; LYS-1985; LYS-2113; LYS-2135 AND LYS-2238</scope>
    <scope>IDENTIFICATION BY MASS SPECTROMETRY [LARGE SCALE ANALYSIS]</scope>
</reference>
<reference key="17">
    <citation type="journal article" date="2015" name="Cell Rep.">
        <title>SUMO-2 orchestrates chromatin modifiers in response to DNA damage.</title>
        <authorList>
            <person name="Hendriks I.A."/>
            <person name="Treffers L.W."/>
            <person name="Verlaan-de Vries M."/>
            <person name="Olsen J.V."/>
            <person name="Vertegaal A.C."/>
        </authorList>
    </citation>
    <scope>SUMOYLATION [LARGE SCALE ANALYSIS] AT LYS-2113; LYS-2135 AND LYS-2238</scope>
    <scope>IDENTIFICATION BY MASS SPECTROMETRY [LARGE SCALE ANALYSIS]</scope>
</reference>
<reference key="18">
    <citation type="journal article" date="2015" name="Mol. Cell. Proteomics">
        <title>System-wide analysis of SUMOylation dynamics in response to replication stress reveals novel small ubiquitin-like modified target proteins and acceptor lysines relevant for genome stability.</title>
        <authorList>
            <person name="Xiao Z."/>
            <person name="Chang J.G."/>
            <person name="Hendriks I.A."/>
            <person name="Sigurdsson J.O."/>
            <person name="Olsen J.V."/>
            <person name="Vertegaal A.C."/>
        </authorList>
    </citation>
    <scope>SUMOYLATION [LARGE SCALE ANALYSIS] AT LYS-329; LYS-1207; LYS-1985; LYS-2113; LYS-2135; LYS-2194; LYS-2238; LYS-2284 AND LYS-2413</scope>
    <scope>IDENTIFICATION BY MASS SPECTROMETRY [LARGE SCALE ANALYSIS]</scope>
</reference>
<reference key="19">
    <citation type="journal article" date="2017" name="Nat. Struct. Mol. Biol.">
        <title>Site-specific mapping of the human SUMO proteome reveals co-modification with phosphorylation.</title>
        <authorList>
            <person name="Hendriks I.A."/>
            <person name="Lyon D."/>
            <person name="Young C."/>
            <person name="Jensen L.J."/>
            <person name="Vertegaal A.C."/>
            <person name="Nielsen M.L."/>
        </authorList>
    </citation>
    <scope>SUMOYLATION [LARGE SCALE ANALYSIS] AT LYS-4; LYS-178; LYS-323; LYS-329; LYS-349; LYS-432; LYS-460; LYS-465; LYS-482; LYS-570; LYS-613; LYS-654; LYS-785; LYS-791; LYS-817; LYS-826; LYS-928; LYS-990; LYS-1091; LYS-1140; LYS-1162; LYS-1199; LYS-1207; LYS-1461; LYS-1502; LYS-1985; LYS-1992; LYS-2103; LYS-2113; LYS-2135; LYS-2139; LYS-2146; LYS-2159; LYS-2194; LYS-2206; LYS-2238; LYS-2284; LYS-2378; LYS-2413; LYS-2457; LYS-2532; LYS-2546; LYS-2629; LYS-2679; LYS-2698; LYS-2784 AND LYS-3041</scope>
    <scope>IDENTIFICATION BY MASS SPECTROMETRY [LARGE SCALE ANALYSIS]</scope>
</reference>
<reference key="20">
    <citation type="journal article" date="2024" name="J. Clin. Invest.">
        <title>MGA loss-of-function variants cause premature ovarian insufficiency.</title>
        <authorList>
            <person name="Tang S."/>
            <person name="Guo T."/>
            <person name="Song C."/>
            <person name="Wang L."/>
            <person name="Zhang J."/>
            <person name="Rajkovic A."/>
            <person name="Lin X."/>
            <person name="Chen S."/>
            <person name="Liu Y."/>
            <person name="Tian W."/>
            <person name="Wu B."/>
            <person name="Wang S."/>
            <person name="Wang W."/>
            <person name="Lai Y."/>
            <person name="Wang A."/>
            <person name="Xu S."/>
            <person name="Jin L."/>
            <person name="Ke H."/>
            <person name="Zhao S."/>
            <person name="Li Y."/>
            <person name="Qin Y."/>
            <person name="Zhang F."/>
            <person name="Chen Z.J."/>
        </authorList>
    </citation>
    <scope>INVOLVEMENT IN POF26</scope>
    <scope>VARIANTS POF26 896-ARG--LYS-3065 DEL; 910-ARG--LYS-3065 DEL AND 1073-ARG--LYS-3065 DEL</scope>
    <scope>TISSUE SPECIFICITY</scope>
    <scope>DEVELOPMENTAL STAGE</scope>
</reference>
<dbReference type="EMBL" id="AC016134">
    <property type="status" value="NOT_ANNOTATED_CDS"/>
    <property type="molecule type" value="Genomic_DNA"/>
</dbReference>
<dbReference type="EMBL" id="AC073657">
    <property type="status" value="NOT_ANNOTATED_CDS"/>
    <property type="molecule type" value="Genomic_DNA"/>
</dbReference>
<dbReference type="EMBL" id="BC136659">
    <property type="protein sequence ID" value="AAI36660.1"/>
    <property type="molecule type" value="mRNA"/>
</dbReference>
<dbReference type="EMBL" id="AK022696">
    <property type="protein sequence ID" value="BAB14186.1"/>
    <property type="status" value="ALT_INIT"/>
    <property type="molecule type" value="mRNA"/>
</dbReference>
<dbReference type="EMBL" id="AK023360">
    <property type="protein sequence ID" value="BAB14543.1"/>
    <property type="status" value="ALT_INIT"/>
    <property type="molecule type" value="mRNA"/>
</dbReference>
<dbReference type="EMBL" id="AB011090">
    <property type="protein sequence ID" value="BAA25444.1"/>
    <property type="molecule type" value="mRNA"/>
</dbReference>
<dbReference type="EMBL" id="AL050181">
    <property type="protein sequence ID" value="CAB43310.1"/>
    <property type="molecule type" value="mRNA"/>
</dbReference>
<dbReference type="CCDS" id="CCDS55959.1">
    <molecule id="Q8IWI9-4"/>
</dbReference>
<dbReference type="CCDS" id="CCDS55960.1">
    <molecule id="Q8IWI9-3"/>
</dbReference>
<dbReference type="PIR" id="T00081">
    <property type="entry name" value="T00081"/>
</dbReference>
<dbReference type="RefSeq" id="NP_001074010.2">
    <molecule id="Q8IWI9-3"/>
    <property type="nucleotide sequence ID" value="NM_001080541.3"/>
</dbReference>
<dbReference type="RefSeq" id="NP_001157745.1">
    <molecule id="Q8IWI9-4"/>
    <property type="nucleotide sequence ID" value="NM_001164273.2"/>
</dbReference>
<dbReference type="RefSeq" id="XP_047288236.1">
    <molecule id="Q8IWI9-4"/>
    <property type="nucleotide sequence ID" value="XM_047432280.1"/>
</dbReference>
<dbReference type="RefSeq" id="XP_047288247.1">
    <molecule id="Q8IWI9-3"/>
    <property type="nucleotide sequence ID" value="XM_047432291.1"/>
</dbReference>
<dbReference type="SMR" id="Q8IWI9"/>
<dbReference type="BioGRID" id="116870">
    <property type="interactions" value="249"/>
</dbReference>
<dbReference type="ComplexPortal" id="CPX-2551">
    <property type="entry name" value="MGA-MAX transcriptional repressor complex"/>
</dbReference>
<dbReference type="CORUM" id="Q8IWI9"/>
<dbReference type="DIP" id="DIP-57615N"/>
<dbReference type="ELM" id="Q8IWI9"/>
<dbReference type="FunCoup" id="Q8IWI9">
    <property type="interactions" value="3726"/>
</dbReference>
<dbReference type="IntAct" id="Q8IWI9">
    <property type="interactions" value="128"/>
</dbReference>
<dbReference type="MINT" id="Q8IWI9"/>
<dbReference type="STRING" id="9606.ENSP00000219905"/>
<dbReference type="CarbonylDB" id="Q8IWI9"/>
<dbReference type="GlyConnect" id="2859">
    <property type="glycosylation" value="1 O-GlcNAc glycan (1 site)"/>
</dbReference>
<dbReference type="GlyCosmos" id="Q8IWI9">
    <property type="glycosylation" value="6 sites, 1 glycan"/>
</dbReference>
<dbReference type="GlyGen" id="Q8IWI9">
    <property type="glycosylation" value="18 sites, 1 N-linked glycan (1 site), 1 O-linked glycan (17 sites)"/>
</dbReference>
<dbReference type="iPTMnet" id="Q8IWI9"/>
<dbReference type="PhosphoSitePlus" id="Q8IWI9"/>
<dbReference type="SwissPalm" id="Q8IWI9"/>
<dbReference type="BioMuta" id="MGA"/>
<dbReference type="DMDM" id="527504082"/>
<dbReference type="jPOST" id="Q8IWI9"/>
<dbReference type="MassIVE" id="Q8IWI9"/>
<dbReference type="PaxDb" id="9606-ENSP00000219905"/>
<dbReference type="PeptideAtlas" id="Q8IWI9"/>
<dbReference type="ProteomicsDB" id="17160"/>
<dbReference type="ProteomicsDB" id="27509"/>
<dbReference type="Pumba" id="Q8IWI9"/>
<dbReference type="Antibodypedia" id="6067">
    <property type="antibodies" value="86 antibodies from 15 providers"/>
</dbReference>
<dbReference type="Ensembl" id="ENST00000219905.13">
    <molecule id="Q8IWI9-4"/>
    <property type="protein sequence ID" value="ENSP00000219905.7"/>
    <property type="gene ID" value="ENSG00000174197.19"/>
</dbReference>
<dbReference type="Ensembl" id="ENST00000566586.6">
    <molecule id="Q8IWI9-3"/>
    <property type="protein sequence ID" value="ENSP00000456141.1"/>
    <property type="gene ID" value="ENSG00000174197.19"/>
</dbReference>
<dbReference type="GeneID" id="23269"/>
<dbReference type="KEGG" id="hsa:23269"/>
<dbReference type="UCSC" id="uc010ucy.2">
    <molecule id="Q8IWI9-4"/>
    <property type="organism name" value="human"/>
</dbReference>
<dbReference type="AGR" id="HGNC:14010"/>
<dbReference type="CTD" id="23269"/>
<dbReference type="DisGeNET" id="23269"/>
<dbReference type="GeneCards" id="MGA"/>
<dbReference type="HGNC" id="HGNC:14010">
    <property type="gene designation" value="MGA"/>
</dbReference>
<dbReference type="HPA" id="ENSG00000174197">
    <property type="expression patterns" value="Low tissue specificity"/>
</dbReference>
<dbReference type="MalaCards" id="MGA"/>
<dbReference type="MIM" id="616061">
    <property type="type" value="gene"/>
</dbReference>
<dbReference type="MIM" id="621065">
    <property type="type" value="phenotype"/>
</dbReference>
<dbReference type="neXtProt" id="NX_Q8IWI9"/>
<dbReference type="OpenTargets" id="ENSG00000174197"/>
<dbReference type="PharmGKB" id="PA134976336"/>
<dbReference type="VEuPathDB" id="HostDB:ENSG00000174197"/>
<dbReference type="eggNOG" id="KOG3585">
    <property type="taxonomic scope" value="Eukaryota"/>
</dbReference>
<dbReference type="GeneTree" id="ENSGT00940000156269"/>
<dbReference type="HOGENOM" id="CLU_000469_1_0_1"/>
<dbReference type="InParanoid" id="Q8IWI9"/>
<dbReference type="OMA" id="FQRKATH"/>
<dbReference type="OrthoDB" id="6119313at2759"/>
<dbReference type="PAN-GO" id="Q8IWI9">
    <property type="GO annotations" value="5 GO annotations based on evolutionary models"/>
</dbReference>
<dbReference type="TreeFam" id="TF106341"/>
<dbReference type="PathwayCommons" id="Q8IWI9"/>
<dbReference type="Reactome" id="R-HSA-8953750">
    <property type="pathway name" value="Transcriptional Regulation by E2F6"/>
</dbReference>
<dbReference type="SignaLink" id="Q8IWI9"/>
<dbReference type="SIGNOR" id="Q8IWI9"/>
<dbReference type="BioGRID-ORCS" id="23269">
    <property type="hits" value="48 hits in 1182 CRISPR screens"/>
</dbReference>
<dbReference type="ChiTaRS" id="MGA">
    <property type="organism name" value="human"/>
</dbReference>
<dbReference type="GenomeRNAi" id="23269"/>
<dbReference type="Pharos" id="Q8IWI9">
    <property type="development level" value="Tbio"/>
</dbReference>
<dbReference type="PRO" id="PR:Q8IWI9"/>
<dbReference type="Proteomes" id="UP000005640">
    <property type="component" value="Chromosome 15"/>
</dbReference>
<dbReference type="RNAct" id="Q8IWI9">
    <property type="molecule type" value="protein"/>
</dbReference>
<dbReference type="Bgee" id="ENSG00000174197">
    <property type="expression patterns" value="Expressed in calcaneal tendon and 208 other cell types or tissues"/>
</dbReference>
<dbReference type="ExpressionAtlas" id="Q8IWI9">
    <property type="expression patterns" value="baseline and differential"/>
</dbReference>
<dbReference type="GO" id="GO:0000785">
    <property type="term" value="C:chromatin"/>
    <property type="evidence" value="ECO:0000247"/>
    <property type="project" value="NTNU_SB"/>
</dbReference>
<dbReference type="GO" id="GO:0071339">
    <property type="term" value="C:MLL1 complex"/>
    <property type="evidence" value="ECO:0000314"/>
    <property type="project" value="UniProtKB"/>
</dbReference>
<dbReference type="GO" id="GO:0005654">
    <property type="term" value="C:nucleoplasm"/>
    <property type="evidence" value="ECO:0000304"/>
    <property type="project" value="Reactome"/>
</dbReference>
<dbReference type="GO" id="GO:0005634">
    <property type="term" value="C:nucleus"/>
    <property type="evidence" value="ECO:0000318"/>
    <property type="project" value="GO_Central"/>
</dbReference>
<dbReference type="GO" id="GO:0000981">
    <property type="term" value="F:DNA-binding transcription factor activity, RNA polymerase II-specific"/>
    <property type="evidence" value="ECO:0000247"/>
    <property type="project" value="NTNU_SB"/>
</dbReference>
<dbReference type="GO" id="GO:0046983">
    <property type="term" value="F:protein dimerization activity"/>
    <property type="evidence" value="ECO:0007669"/>
    <property type="project" value="InterPro"/>
</dbReference>
<dbReference type="GO" id="GO:0000978">
    <property type="term" value="F:RNA polymerase II cis-regulatory region sequence-specific DNA binding"/>
    <property type="evidence" value="ECO:0000318"/>
    <property type="project" value="GO_Central"/>
</dbReference>
<dbReference type="GO" id="GO:0001708">
    <property type="term" value="P:cell fate specification"/>
    <property type="evidence" value="ECO:0000318"/>
    <property type="project" value="GO_Central"/>
</dbReference>
<dbReference type="GO" id="GO:0045893">
    <property type="term" value="P:positive regulation of DNA-templated transcription"/>
    <property type="evidence" value="ECO:0007669"/>
    <property type="project" value="InterPro"/>
</dbReference>
<dbReference type="GO" id="GO:0006357">
    <property type="term" value="P:regulation of transcription by RNA polymerase II"/>
    <property type="evidence" value="ECO:0000318"/>
    <property type="project" value="GO_Central"/>
</dbReference>
<dbReference type="CDD" id="cd18911">
    <property type="entry name" value="bHLHzip_MGA"/>
    <property type="match status" value="1"/>
</dbReference>
<dbReference type="CDD" id="cd20195">
    <property type="entry name" value="T-box_MGA-like"/>
    <property type="match status" value="1"/>
</dbReference>
<dbReference type="FunFam" id="2.60.40.820:FF:000009">
    <property type="entry name" value="MAX gene-associated protein isoform X1"/>
    <property type="match status" value="1"/>
</dbReference>
<dbReference type="FunFam" id="4.10.280.10:FF:000040">
    <property type="entry name" value="MAX gene-associated protein isoform X1"/>
    <property type="match status" value="1"/>
</dbReference>
<dbReference type="Gene3D" id="4.10.280.10">
    <property type="entry name" value="Helix-loop-helix DNA-binding domain"/>
    <property type="match status" value="1"/>
</dbReference>
<dbReference type="Gene3D" id="2.60.40.820">
    <property type="entry name" value="Transcription factor, T-box"/>
    <property type="match status" value="1"/>
</dbReference>
<dbReference type="InterPro" id="IPR011598">
    <property type="entry name" value="bHLH_dom"/>
</dbReference>
<dbReference type="InterPro" id="IPR036638">
    <property type="entry name" value="HLH_DNA-bd_sf"/>
</dbReference>
<dbReference type="InterPro" id="IPR037935">
    <property type="entry name" value="MAX_gene-associated_bHLHzip"/>
</dbReference>
<dbReference type="InterPro" id="IPR032060">
    <property type="entry name" value="MGA_dom"/>
</dbReference>
<dbReference type="InterPro" id="IPR008967">
    <property type="entry name" value="p53-like_TF_DNA-bd_sf"/>
</dbReference>
<dbReference type="InterPro" id="IPR046360">
    <property type="entry name" value="T-box_DNA-bd"/>
</dbReference>
<dbReference type="InterPro" id="IPR036960">
    <property type="entry name" value="T-box_sf"/>
</dbReference>
<dbReference type="InterPro" id="IPR001699">
    <property type="entry name" value="TF_T-box"/>
</dbReference>
<dbReference type="InterPro" id="IPR018186">
    <property type="entry name" value="TF_T-box_CS"/>
</dbReference>
<dbReference type="PANTHER" id="PTHR11267:SF32">
    <property type="entry name" value="MAX GENE-ASSOCIATED PROTEIN"/>
    <property type="match status" value="1"/>
</dbReference>
<dbReference type="PANTHER" id="PTHR11267">
    <property type="entry name" value="T-BOX PROTEIN-RELATED"/>
    <property type="match status" value="1"/>
</dbReference>
<dbReference type="Pfam" id="PF00010">
    <property type="entry name" value="HLH"/>
    <property type="match status" value="1"/>
</dbReference>
<dbReference type="Pfam" id="PF16059">
    <property type="entry name" value="MGA_dom"/>
    <property type="match status" value="1"/>
</dbReference>
<dbReference type="Pfam" id="PF00907">
    <property type="entry name" value="T-box"/>
    <property type="match status" value="1"/>
</dbReference>
<dbReference type="PRINTS" id="PR00937">
    <property type="entry name" value="TBOX"/>
</dbReference>
<dbReference type="SMART" id="SM00353">
    <property type="entry name" value="HLH"/>
    <property type="match status" value="1"/>
</dbReference>
<dbReference type="SMART" id="SM00425">
    <property type="entry name" value="TBOX"/>
    <property type="match status" value="1"/>
</dbReference>
<dbReference type="SUPFAM" id="SSF47459">
    <property type="entry name" value="HLH, helix-loop-helix DNA-binding domain"/>
    <property type="match status" value="1"/>
</dbReference>
<dbReference type="SUPFAM" id="SSF49417">
    <property type="entry name" value="p53-like transcription factors"/>
    <property type="match status" value="1"/>
</dbReference>
<dbReference type="PROSITE" id="PS50888">
    <property type="entry name" value="BHLH"/>
    <property type="match status" value="1"/>
</dbReference>
<dbReference type="PROSITE" id="PS01264">
    <property type="entry name" value="TBOX_2"/>
    <property type="match status" value="1"/>
</dbReference>
<dbReference type="PROSITE" id="PS50252">
    <property type="entry name" value="TBOX_3"/>
    <property type="match status" value="1"/>
</dbReference>
<sequence length="3065" mass="336159">MEEKQQIILANQDGGTVAGAAPTFFVILKQPGNGKTDQGILVTNQDACALASSVSSPVKSKGKICLPADCTVGGITVTLDNNSMWNEFYHRSTEMILTKQGRRMFPYCRYWITGLDSNLKYILVMDISPVDNHRYKWNGRWWEPSGKAEPHVLGRVFIHPESPSTGHYWMHQPVSFYKLKLTNNTLDQEGHIILHSMHRYLPRLHLVPAEKAVEVIQLNGPGVHTFTFPQTEFFAVTAYQNIQITQLKIDYNPFAKGFRDDGLNNKPQRDGKQKNSSDQEGNNISSSSGHRVRLTEGQGSEIQPGDLDPLSRGHETSGKGLEKTSLNIKRDFLGFMDTDSALSEVPQLKQEISECLIASSFEDDSRVASPLDQNGSFNVVIKEEPLDDYDYELGECPEGVTVKQEETDEETDVYSNSDDDPILEKQLKRHNKVDNPEADHLSSKWLPSSPSGVAKAKMFKLDTGKMPVVYLEPCAVTRSTVKISELPDNMLSTSRKDKSSMLAELEYLPTYIENSNETAFCLGKESENGLRKHSPDLRVVQKYPLLKEPQWKYPDISDSISTERILDDSKDSVGDSLSGKEDLGRKRTTMLKIATAAKVVNANQNASPNVPGKRGRPRKLKLCKAGRPPKNTGKSLISTKNTPVSPGSTFPDVKPDLEDVDGVLFVSFESKEALDIHAVDGTTEESSSLQASTTNDSGYRARISQLEKELIEDLKTLRHKQVIHPGLQEVGLKLNSVDPTMSIDLKYLGVQLPLAPATSFPFWNLTGTNPASPDAGFPFVSRTGKTNDFTKIKGWRGKFHSASASRNEGGNSESSLKNRSAFCSDKLDEYLENEGKLMETSMGFSSNAPTSPVVYQLPTKSTSYVRTLDSVLKKQSTISPSTSYSLKPHSVPPVSRKAKSQNRQATFSGRTKSSYKSILPYPVSPKQKYSHVILGDKVTKNSSGIISENQANNFVVPTLDENIFPKQISLRQAQQQQQQQQGSRPPGLSKSQVKLMDLEDCALWEGKPRTYITEERADVSLTTLLTAQASLKTKPIHTIIRKRAPPCNNDFCRLGCVCSSLALEKRQPAHCRRPDCMFGCTCLKRKVVLVKGGSKTKHFQRKAAHRDPVFYDTLGEEAREEEEGIREEEEQLKEKKKRKKLEYTICETEPEQPVRHYPLWVKVEGEVDPEPVYIPTPSVIEPMKPLLLPQPEVLSPTVKGKLLTGIKSPRSYTPKPNPVIREEDKDPVYLYFESMMTCARVRVYERKKEDQRQPSSSSSPSPSFQQQTSCHSSPENHNNAKEPDSEQQPLKQLTCDLEDDSDKLQEKSWKSSCNEGESSSTSYMHQRSPGGPTKLIEIISDCNWEEDRNKILSILSQHINSNMPQSLKVGSFIIELASQRKSRGEKNPPVYSSRVKISMPSCQDQDDMAEKSGSETPDGPLSPGKMEDISPVQTDALDSVRERLHGGKGLPFYAGLSPAGKLVAYKRKPSSSTSGLIQVASNAKVAASRKPRTLLPSTSNSKMASSSGTATNRPGKNLKAFVPAKRPIAARPSPGGVFTQFVMSKVGALQQKIPGVSTPQTLAGTQKFSIRPSPVMVVTPVVSSEPVQVCSPVTAAVTTTTPQVFLENTTAVTPMTAISDVETKETTYSSGATTTGVVEVSETNTSTSVTSTQSTATVNLTKTTGITTPVASVAFPKSLVASPSTITLPVASTASTSLVVVTAAASSSMVTTPTSSLGSVPIILSGINGSPPVSQRPENAAQIPVATPQVSPNTVKRAGPRLLLIPVQQGSPTLRPVSNTQLQGHRMVLQPVRSPSGMNLFRHPNGQIVQLLPLHQLRGSNTQPNLQPVMFRNPGSVMGIRLPAPSKPSETPPSSTSSSAFSVMNPVIQAVGSSSAVNVITQAPSLLSSGASFVSQAGTLTLRISPPEPQSFASKTGSETKITYSSGGQPVGTASLIPLQSGSFALLQLPGQKPVPSSILQHVASLQMKRESQNPDQKDETNSIKREQETKKVLQSEGEAVDPEANVIKQNSGAATSEETLNDSLEDRGDHLDEECLPEEGCATVKPSEHSCITGSHTDQDYKDVNEEYGARNRKSSKEKVAVLEVRTISEKASNKTVQNLSKVQHQKLGDVKVEQQKGFDNPEENSSEFPVTFKEESKFELSGSKVMEQQSNLQPEAKEKECGDSLEKDRERWRKHLKGPLTRKCVGASQECKKEADEQLIKETKTCQENSDVFQQEQGISDLLGKSGITEDARVLKTECDSWSRISNPSAFSIVPRRAAKSSRGNGHFQGHLLLPGEQIQPKQEKKGGRSSADFTVLDLEEDDEDDNEKTDDSIDEIVDVVSDYQSEEVDDVEKNNCVEYIEDDEEHVDIETVEELSEEINVAHLKTTAAHTQSFKQPSCTHISADEKAAERSRKAPPIPLKLKPDYWSDKLQKEAEAFAYYRRTHTANERRRRGEMRDLFEKLKITLGLLHSSKVSKSLILTRAFSEIQGLTDQADKLIGQKNLLTRKRNILIRKVSSLSGKTEEVVLKKLEYIYAKQQALEAQKRKKKMGSDEFDISPRISKQQEGSSASSVDLGQMFINNRRGKPLILSRKKDQATENTSPLNTPHTSANLVMTPQGQLLTLKGPLFSGPVVAVSPDLLESDLKPQVAGSAVALPENDDLFMMPRIVNVTSLATEGGLVDMGGSKYPHEVPDSKPSDHLKDTVRNEDNSLEDKGRISSRGNRDGRVTLGPTQVFLANKDSGYPQIVDVSNMQKAQEFLPKKISGDMRGIQYKWKESESRGERVKSKDSSFHKLKMKDLKDSSIEMELRKVTSAIEEAALDSSELLTNMEDEDDTDETLTSLLNEIAFLNQQLNDDSVGLAELPSSMDTEFPGDARRAFISKVPPGSRATFQVEHLGTGLKELPDVQGESDSISPLLLHLEDDDFSENEKQLAEPASEPDVLKIVIDSEIKDSLLSNKKAIDGGKNTSGLPAEPESVSSPPTLHMKTGLENSNSTDTLWRPMPKLAPLGLKVANPSSDADGQSLKVMPCLAPIAAKVGSVGHKMNLTGNDQEGRESKVMPTLAPVVAKLGNSGASPSSAGK</sequence>
<evidence type="ECO:0000250" key="1"/>
<evidence type="ECO:0000250" key="2">
    <source>
        <dbReference type="UniProtKB" id="A2AWL7"/>
    </source>
</evidence>
<evidence type="ECO:0000255" key="3"/>
<evidence type="ECO:0000255" key="4">
    <source>
        <dbReference type="PROSITE-ProRule" id="PRU00201"/>
    </source>
</evidence>
<evidence type="ECO:0000255" key="5">
    <source>
        <dbReference type="PROSITE-ProRule" id="PRU00981"/>
    </source>
</evidence>
<evidence type="ECO:0000256" key="6">
    <source>
        <dbReference type="SAM" id="MobiDB-lite"/>
    </source>
</evidence>
<evidence type="ECO:0000269" key="7">
    <source>
    </source>
</evidence>
<evidence type="ECO:0000269" key="8">
    <source>
    </source>
</evidence>
<evidence type="ECO:0000269" key="9">
    <source>
    </source>
</evidence>
<evidence type="ECO:0000303" key="10">
    <source>
    </source>
</evidence>
<evidence type="ECO:0000303" key="11">
    <source>
    </source>
</evidence>
<evidence type="ECO:0000305" key="12"/>
<evidence type="ECO:0007744" key="13">
    <source>
    </source>
</evidence>
<evidence type="ECO:0007744" key="14">
    <source>
    </source>
</evidence>
<evidence type="ECO:0007744" key="15">
    <source>
    </source>
</evidence>
<evidence type="ECO:0007744" key="16">
    <source>
    </source>
</evidence>
<evidence type="ECO:0007744" key="17">
    <source>
    </source>
</evidence>
<evidence type="ECO:0007744" key="18">
    <source>
    </source>
</evidence>
<evidence type="ECO:0007744" key="19">
    <source>
    </source>
</evidence>
<evidence type="ECO:0007744" key="20">
    <source>
    </source>
</evidence>
<evidence type="ECO:0007744" key="21">
    <source>
    </source>
</evidence>
<evidence type="ECO:0007744" key="22">
    <source>
    </source>
</evidence>
<accession>Q8IWI9</accession>
<accession>B9EGR5</accession>
<accession>E7ENI0</accession>
<accession>F5H7K2</accession>
<accession>Q9H8R3</accession>
<accession>Q9H9N7</accession>
<accession>Q9UG69</accession>
<accession>Q9Y4E9</accession>
<name>MGAP_HUMAN</name>
<keyword id="KW-0025">Alternative splicing</keyword>
<keyword id="KW-0175">Coiled coil</keyword>
<keyword id="KW-0225">Disease variant</keyword>
<keyword id="KW-0238">DNA-binding</keyword>
<keyword id="KW-1017">Isopeptide bond</keyword>
<keyword id="KW-0488">Methylation</keyword>
<keyword id="KW-0539">Nucleus</keyword>
<keyword id="KW-0597">Phosphoprotein</keyword>
<keyword id="KW-1066">Premature ovarian failure</keyword>
<keyword id="KW-1267">Proteomics identification</keyword>
<keyword id="KW-1185">Reference proteome</keyword>
<keyword id="KW-0678">Repressor</keyword>
<keyword id="KW-0804">Transcription</keyword>
<keyword id="KW-0805">Transcription regulation</keyword>
<keyword id="KW-0832">Ubl conjugation</keyword>
<proteinExistence type="evidence at protein level"/>